<proteinExistence type="inferred from homology"/>
<feature type="chain" id="PRO_0000291027" description="NAD(P)H dehydrogenase (quinone)">
    <location>
        <begin position="1"/>
        <end position="199"/>
    </location>
</feature>
<feature type="domain" description="Flavodoxin-like" evidence="1">
    <location>
        <begin position="4"/>
        <end position="190"/>
    </location>
</feature>
<feature type="binding site" evidence="1">
    <location>
        <begin position="10"/>
        <end position="15"/>
    </location>
    <ligand>
        <name>FMN</name>
        <dbReference type="ChEBI" id="CHEBI:58210"/>
    </ligand>
</feature>
<feature type="binding site" evidence="1">
    <location>
        <position position="12"/>
    </location>
    <ligand>
        <name>NAD(+)</name>
        <dbReference type="ChEBI" id="CHEBI:57540"/>
    </ligand>
</feature>
<feature type="binding site" evidence="1">
    <location>
        <begin position="78"/>
        <end position="80"/>
    </location>
    <ligand>
        <name>FMN</name>
        <dbReference type="ChEBI" id="CHEBI:58210"/>
    </ligand>
</feature>
<feature type="binding site" evidence="1">
    <location>
        <position position="98"/>
    </location>
    <ligand>
        <name>substrate</name>
    </ligand>
</feature>
<feature type="binding site" evidence="1">
    <location>
        <begin position="113"/>
        <end position="119"/>
    </location>
    <ligand>
        <name>FMN</name>
        <dbReference type="ChEBI" id="CHEBI:58210"/>
    </ligand>
</feature>
<feature type="binding site" evidence="1">
    <location>
        <position position="134"/>
    </location>
    <ligand>
        <name>FMN</name>
        <dbReference type="ChEBI" id="CHEBI:58210"/>
    </ligand>
</feature>
<accession>Q130C0</accession>
<gene>
    <name type="ordered locus">RPD_4352</name>
</gene>
<comment type="catalytic activity">
    <reaction evidence="1">
        <text>a quinone + NADH + H(+) = a quinol + NAD(+)</text>
        <dbReference type="Rhea" id="RHEA:46160"/>
        <dbReference type="ChEBI" id="CHEBI:15378"/>
        <dbReference type="ChEBI" id="CHEBI:24646"/>
        <dbReference type="ChEBI" id="CHEBI:57540"/>
        <dbReference type="ChEBI" id="CHEBI:57945"/>
        <dbReference type="ChEBI" id="CHEBI:132124"/>
        <dbReference type="EC" id="1.6.5.2"/>
    </reaction>
</comment>
<comment type="catalytic activity">
    <reaction evidence="1">
        <text>a quinone + NADPH + H(+) = a quinol + NADP(+)</text>
        <dbReference type="Rhea" id="RHEA:46164"/>
        <dbReference type="ChEBI" id="CHEBI:15378"/>
        <dbReference type="ChEBI" id="CHEBI:24646"/>
        <dbReference type="ChEBI" id="CHEBI:57783"/>
        <dbReference type="ChEBI" id="CHEBI:58349"/>
        <dbReference type="ChEBI" id="CHEBI:132124"/>
        <dbReference type="EC" id="1.6.5.2"/>
    </reaction>
</comment>
<comment type="cofactor">
    <cofactor evidence="1">
        <name>FMN</name>
        <dbReference type="ChEBI" id="CHEBI:58210"/>
    </cofactor>
    <text evidence="1">Binds 1 FMN per monomer.</text>
</comment>
<comment type="similarity">
    <text evidence="1">Belongs to the WrbA family.</text>
</comment>
<sequence>MAKVLVLYYSAYGHIEAMANAVAEGAREAGATVDIKRVPELVPPDVAKASHYKLDQAAPVATIGDLADYDAIVVGTGTRFGRMASQMANFLDQAGGLWAKGALHGKVGGAFTSTATQHGGQETTLFSIITNLLHFGMVVVGLNYGFAGQMKLDEVTGGAPYGATTITGGDGSRQPSANELAGARYQGKTIAETAIKLHG</sequence>
<keyword id="KW-0285">Flavoprotein</keyword>
<keyword id="KW-0288">FMN</keyword>
<keyword id="KW-0520">NAD</keyword>
<keyword id="KW-0521">NADP</keyword>
<keyword id="KW-0547">Nucleotide-binding</keyword>
<keyword id="KW-0560">Oxidoreductase</keyword>
<name>NQOR_RHOPS</name>
<evidence type="ECO:0000255" key="1">
    <source>
        <dbReference type="HAMAP-Rule" id="MF_01017"/>
    </source>
</evidence>
<protein>
    <recommendedName>
        <fullName evidence="1">NAD(P)H dehydrogenase (quinone)</fullName>
        <ecNumber evidence="1">1.6.5.2</ecNumber>
    </recommendedName>
    <alternativeName>
        <fullName>Flavoprotein WrbA</fullName>
    </alternativeName>
    <alternativeName>
        <fullName evidence="1">NAD(P)H:quinone oxidoreductase</fullName>
        <shortName evidence="1">NQO</shortName>
    </alternativeName>
</protein>
<organism>
    <name type="scientific">Rhodopseudomonas palustris (strain BisB5)</name>
    <dbReference type="NCBI Taxonomy" id="316057"/>
    <lineage>
        <taxon>Bacteria</taxon>
        <taxon>Pseudomonadati</taxon>
        <taxon>Pseudomonadota</taxon>
        <taxon>Alphaproteobacteria</taxon>
        <taxon>Hyphomicrobiales</taxon>
        <taxon>Nitrobacteraceae</taxon>
        <taxon>Rhodopseudomonas</taxon>
    </lineage>
</organism>
<reference key="1">
    <citation type="submission" date="2006-03" db="EMBL/GenBank/DDBJ databases">
        <title>Complete sequence of Rhodopseudomonas palustris BisB5.</title>
        <authorList>
            <consortium name="US DOE Joint Genome Institute"/>
            <person name="Copeland A."/>
            <person name="Lucas S."/>
            <person name="Lapidus A."/>
            <person name="Barry K."/>
            <person name="Detter J.C."/>
            <person name="Glavina del Rio T."/>
            <person name="Hammon N."/>
            <person name="Israni S."/>
            <person name="Dalin E."/>
            <person name="Tice H."/>
            <person name="Pitluck S."/>
            <person name="Chain P."/>
            <person name="Malfatti S."/>
            <person name="Shin M."/>
            <person name="Vergez L."/>
            <person name="Schmutz J."/>
            <person name="Larimer F."/>
            <person name="Land M."/>
            <person name="Hauser L."/>
            <person name="Pelletier D.A."/>
            <person name="Kyrpides N."/>
            <person name="Lykidis A."/>
            <person name="Oda Y."/>
            <person name="Harwood C.S."/>
            <person name="Richardson P."/>
        </authorList>
    </citation>
    <scope>NUCLEOTIDE SEQUENCE [LARGE SCALE GENOMIC DNA]</scope>
    <source>
        <strain>BisB5</strain>
    </source>
</reference>
<dbReference type="EC" id="1.6.5.2" evidence="1"/>
<dbReference type="EMBL" id="CP000283">
    <property type="protein sequence ID" value="ABE41569.1"/>
    <property type="molecule type" value="Genomic_DNA"/>
</dbReference>
<dbReference type="SMR" id="Q130C0"/>
<dbReference type="STRING" id="316057.RPD_4352"/>
<dbReference type="KEGG" id="rpd:RPD_4352"/>
<dbReference type="eggNOG" id="COG0655">
    <property type="taxonomic scope" value="Bacteria"/>
</dbReference>
<dbReference type="HOGENOM" id="CLU_051402_0_2_5"/>
<dbReference type="BioCyc" id="RPAL316057:RPD_RS21895-MONOMER"/>
<dbReference type="Proteomes" id="UP000001818">
    <property type="component" value="Chromosome"/>
</dbReference>
<dbReference type="GO" id="GO:0016020">
    <property type="term" value="C:membrane"/>
    <property type="evidence" value="ECO:0007669"/>
    <property type="project" value="TreeGrafter"/>
</dbReference>
<dbReference type="GO" id="GO:0050660">
    <property type="term" value="F:flavin adenine dinucleotide binding"/>
    <property type="evidence" value="ECO:0007669"/>
    <property type="project" value="UniProtKB-UniRule"/>
</dbReference>
<dbReference type="GO" id="GO:0010181">
    <property type="term" value="F:FMN binding"/>
    <property type="evidence" value="ECO:0007669"/>
    <property type="project" value="InterPro"/>
</dbReference>
<dbReference type="GO" id="GO:0051287">
    <property type="term" value="F:NAD binding"/>
    <property type="evidence" value="ECO:0007669"/>
    <property type="project" value="UniProtKB-UniRule"/>
</dbReference>
<dbReference type="GO" id="GO:0050136">
    <property type="term" value="F:NADH:ubiquinone reductase (non-electrogenic) activity"/>
    <property type="evidence" value="ECO:0007669"/>
    <property type="project" value="RHEA"/>
</dbReference>
<dbReference type="GO" id="GO:0050661">
    <property type="term" value="F:NADP binding"/>
    <property type="evidence" value="ECO:0007669"/>
    <property type="project" value="UniProtKB-UniRule"/>
</dbReference>
<dbReference type="GO" id="GO:0008753">
    <property type="term" value="F:NADPH dehydrogenase (quinone) activity"/>
    <property type="evidence" value="ECO:0007669"/>
    <property type="project" value="RHEA"/>
</dbReference>
<dbReference type="FunFam" id="3.40.50.360:FF:000001">
    <property type="entry name" value="NAD(P)H dehydrogenase (Quinone) FQR1-like"/>
    <property type="match status" value="1"/>
</dbReference>
<dbReference type="Gene3D" id="3.40.50.360">
    <property type="match status" value="1"/>
</dbReference>
<dbReference type="HAMAP" id="MF_01017">
    <property type="entry name" value="NQOR"/>
    <property type="match status" value="1"/>
</dbReference>
<dbReference type="InterPro" id="IPR008254">
    <property type="entry name" value="Flavodoxin/NO_synth"/>
</dbReference>
<dbReference type="InterPro" id="IPR029039">
    <property type="entry name" value="Flavoprotein-like_sf"/>
</dbReference>
<dbReference type="InterPro" id="IPR010089">
    <property type="entry name" value="Flavoprotein_WrbA-like"/>
</dbReference>
<dbReference type="InterPro" id="IPR005025">
    <property type="entry name" value="FMN_Rdtase-like_dom"/>
</dbReference>
<dbReference type="InterPro" id="IPR037513">
    <property type="entry name" value="NQO"/>
</dbReference>
<dbReference type="NCBIfam" id="TIGR01755">
    <property type="entry name" value="flav_wrbA"/>
    <property type="match status" value="1"/>
</dbReference>
<dbReference type="NCBIfam" id="NF002999">
    <property type="entry name" value="PRK03767.1"/>
    <property type="match status" value="1"/>
</dbReference>
<dbReference type="PANTHER" id="PTHR30546">
    <property type="entry name" value="FLAVODOXIN-RELATED PROTEIN WRBA-RELATED"/>
    <property type="match status" value="1"/>
</dbReference>
<dbReference type="PANTHER" id="PTHR30546:SF23">
    <property type="entry name" value="FLAVOPROTEIN-LIKE PROTEIN YCP4-RELATED"/>
    <property type="match status" value="1"/>
</dbReference>
<dbReference type="Pfam" id="PF03358">
    <property type="entry name" value="FMN_red"/>
    <property type="match status" value="1"/>
</dbReference>
<dbReference type="SUPFAM" id="SSF52218">
    <property type="entry name" value="Flavoproteins"/>
    <property type="match status" value="1"/>
</dbReference>
<dbReference type="PROSITE" id="PS50902">
    <property type="entry name" value="FLAVODOXIN_LIKE"/>
    <property type="match status" value="1"/>
</dbReference>